<comment type="function">
    <text evidence="1">Relaxes both positive and negative superturns and exhibits a strong decatenase activity.</text>
</comment>
<comment type="catalytic activity">
    <reaction evidence="1">
        <text>ATP-dependent breakage, passage and rejoining of double-stranded DNA.</text>
        <dbReference type="EC" id="5.6.2.2"/>
    </reaction>
</comment>
<comment type="cofactor">
    <cofactor evidence="1">
        <name>Mg(2+)</name>
        <dbReference type="ChEBI" id="CHEBI:18420"/>
    </cofactor>
</comment>
<comment type="subunit">
    <text evidence="1 3">Homodimer. Heterotetramer of two Top6A and two Top6B chains.</text>
</comment>
<comment type="interaction">
    <interactant intactId="EBI-9026768">
        <id>Q8PUB7</id>
    </interactant>
    <interactant intactId="EBI-9026766">
        <id>Q8PUB8</id>
        <label>top6B</label>
    </interactant>
    <organismsDiffer>false</organismsDiffer>
    <experiments>2</experiments>
</comment>
<comment type="similarity">
    <text evidence="1">Belongs to the TOP6A family.</text>
</comment>
<gene>
    <name evidence="1" type="primary">top6A</name>
    <name type="ordered locus">MM_2418</name>
</gene>
<keyword id="KW-0002">3D-structure</keyword>
<keyword id="KW-0067">ATP-binding</keyword>
<keyword id="KW-0238">DNA-binding</keyword>
<keyword id="KW-0413">Isomerase</keyword>
<keyword id="KW-0460">Magnesium</keyword>
<keyword id="KW-0479">Metal-binding</keyword>
<keyword id="KW-0547">Nucleotide-binding</keyword>
<keyword id="KW-0799">Topoisomerase</keyword>
<accession>Q8PUB7</accession>
<name>TOP6A_METMA</name>
<protein>
    <recommendedName>
        <fullName evidence="1">Type 2 DNA topoisomerase 6 subunit A</fullName>
        <ecNumber evidence="1">5.6.2.2</ecNumber>
    </recommendedName>
    <alternativeName>
        <fullName evidence="1">Type II DNA topoisomerase VI subunit A</fullName>
    </alternativeName>
</protein>
<feature type="chain" id="PRO_0000145450" description="Type 2 DNA topoisomerase 6 subunit A">
    <location>
        <begin position="1"/>
        <end position="369"/>
    </location>
</feature>
<feature type="domain" description="Topo IIA-type catalytic" evidence="2">
    <location>
        <begin position="11"/>
        <end position="149"/>
    </location>
</feature>
<feature type="active site" description="O-(5'-phospho-DNA)-tyrosine intermediate" evidence="2">
    <location>
        <position position="106"/>
    </location>
</feature>
<feature type="binding site" evidence="1">
    <location>
        <position position="202"/>
    </location>
    <ligand>
        <name>Mg(2+)</name>
        <dbReference type="ChEBI" id="CHEBI:18420"/>
    </ligand>
</feature>
<feature type="binding site" evidence="1">
    <location>
        <position position="254"/>
    </location>
    <ligand>
        <name>Mg(2+)</name>
        <dbReference type="ChEBI" id="CHEBI:18420"/>
    </ligand>
</feature>
<evidence type="ECO:0000255" key="1">
    <source>
        <dbReference type="HAMAP-Rule" id="MF_00132"/>
    </source>
</evidence>
<evidence type="ECO:0000255" key="2">
    <source>
        <dbReference type="PROSITE-ProRule" id="PRU01385"/>
    </source>
</evidence>
<evidence type="ECO:0000269" key="3">
    <source>
    </source>
</evidence>
<organism>
    <name type="scientific">Methanosarcina mazei (strain ATCC BAA-159 / DSM 3647 / Goe1 / Go1 / JCM 11833 / OCM 88)</name>
    <name type="common">Methanosarcina frisia</name>
    <dbReference type="NCBI Taxonomy" id="192952"/>
    <lineage>
        <taxon>Archaea</taxon>
        <taxon>Methanobacteriati</taxon>
        <taxon>Methanobacteriota</taxon>
        <taxon>Stenosarchaea group</taxon>
        <taxon>Methanomicrobia</taxon>
        <taxon>Methanosarcinales</taxon>
        <taxon>Methanosarcinaceae</taxon>
        <taxon>Methanosarcina</taxon>
    </lineage>
</organism>
<sequence length="369" mass="42127">MEGEKGSKTRKGDALAREKLLEIAEKIYNQFEEEVVPSVSLPSRTKANLEYSDESDVWVYGDRESERSAKTVKGAFQLLKTTYATDFLINEHLARNRGSTLRELYYISEGWDYAKFKEQGESDRLIEDLEILTSLQREYFHMRPEEDGATMFGPIEITEQTKRGERNIHCQKDVGEGGYQIPFNVENIEFQKHDASMIIAIETGGMYARLMENGFDEAYNAILVHLKGQPARSTRRIIKRMNEELGIPVAVFTDGDPWSYRIYASVAYGAIKSAHLSEFMATPAAKFLGLQPSDIVEYELSTDKLTEQDVSALRSELSDPRFESDYWKEQIQLQLDIGKKAEQQAFAGKGLDFVTEVYLPNRLKEMGMI</sequence>
<proteinExistence type="evidence at protein level"/>
<reference key="1">
    <citation type="journal article" date="2002" name="J. Mol. Microbiol. Biotechnol.">
        <title>The genome of Methanosarcina mazei: evidence for lateral gene transfer between Bacteria and Archaea.</title>
        <authorList>
            <person name="Deppenmeier U."/>
            <person name="Johann A."/>
            <person name="Hartsch T."/>
            <person name="Merkl R."/>
            <person name="Schmitz R.A."/>
            <person name="Martinez-Arias R."/>
            <person name="Henne A."/>
            <person name="Wiezer A."/>
            <person name="Baeumer S."/>
            <person name="Jacobi C."/>
            <person name="Brueggemann H."/>
            <person name="Lienard T."/>
            <person name="Christmann A."/>
            <person name="Boemecke M."/>
            <person name="Steckel S."/>
            <person name="Bhattacharyya A."/>
            <person name="Lykidis A."/>
            <person name="Overbeek R."/>
            <person name="Klenk H.-P."/>
            <person name="Gunsalus R.P."/>
            <person name="Fritz H.-J."/>
            <person name="Gottschalk G."/>
        </authorList>
    </citation>
    <scope>NUCLEOTIDE SEQUENCE [LARGE SCALE GENOMIC DNA]</scope>
    <source>
        <strain>ATCC BAA-159 / DSM 3647 / Goe1 / Go1 / JCM 11833 / OCM 88</strain>
    </source>
</reference>
<reference key="2">
    <citation type="journal article" date="2007" name="Nat. Struct. Mol. Biol.">
        <title>Holoenzyme assembly and ATP-mediated conformational dynamics of topoisomerase VI.</title>
        <authorList>
            <person name="Corbett K.D."/>
            <person name="Benedetti P."/>
            <person name="Berger J.M."/>
        </authorList>
    </citation>
    <scope>X-RAY CRYSTALLOGRAPHY (4.0 ANGSTROMS) IN COMPLEX WITH TOP6B</scope>
    <scope>SUBUNIT</scope>
</reference>
<dbReference type="EC" id="5.6.2.2" evidence="1"/>
<dbReference type="EMBL" id="AE008384">
    <property type="protein sequence ID" value="AAM32114.1"/>
    <property type="molecule type" value="Genomic_DNA"/>
</dbReference>
<dbReference type="RefSeq" id="WP_011034342.1">
    <property type="nucleotide sequence ID" value="NC_003901.1"/>
</dbReference>
<dbReference type="PDB" id="2Q2E">
    <property type="method" value="X-ray"/>
    <property type="resolution" value="4.00 A"/>
    <property type="chains" value="A=1-369"/>
</dbReference>
<dbReference type="PDBsum" id="2Q2E"/>
<dbReference type="SMR" id="Q8PUB7"/>
<dbReference type="DIP" id="DIP-29414N"/>
<dbReference type="IntAct" id="Q8PUB7">
    <property type="interactions" value="1"/>
</dbReference>
<dbReference type="KEGG" id="mma:MM_2418"/>
<dbReference type="PATRIC" id="fig|192952.21.peg.2766"/>
<dbReference type="eggNOG" id="arCOG04143">
    <property type="taxonomic scope" value="Archaea"/>
</dbReference>
<dbReference type="HOGENOM" id="CLU_037229_1_0_2"/>
<dbReference type="BRENDA" id="5.6.2.2">
    <property type="organism ID" value="3270"/>
</dbReference>
<dbReference type="EvolutionaryTrace" id="Q8PUB7"/>
<dbReference type="Proteomes" id="UP000000595">
    <property type="component" value="Chromosome"/>
</dbReference>
<dbReference type="GO" id="GO:0005694">
    <property type="term" value="C:chromosome"/>
    <property type="evidence" value="ECO:0007669"/>
    <property type="project" value="InterPro"/>
</dbReference>
<dbReference type="GO" id="GO:0005524">
    <property type="term" value="F:ATP binding"/>
    <property type="evidence" value="ECO:0007669"/>
    <property type="project" value="UniProtKB-KW"/>
</dbReference>
<dbReference type="GO" id="GO:0003677">
    <property type="term" value="F:DNA binding"/>
    <property type="evidence" value="ECO:0007669"/>
    <property type="project" value="UniProtKB-UniRule"/>
</dbReference>
<dbReference type="GO" id="GO:0003918">
    <property type="term" value="F:DNA topoisomerase type II (double strand cut, ATP-hydrolyzing) activity"/>
    <property type="evidence" value="ECO:0007669"/>
    <property type="project" value="UniProtKB-UniRule"/>
</dbReference>
<dbReference type="GO" id="GO:0000287">
    <property type="term" value="F:magnesium ion binding"/>
    <property type="evidence" value="ECO:0007669"/>
    <property type="project" value="UniProtKB-UniRule"/>
</dbReference>
<dbReference type="GO" id="GO:0006265">
    <property type="term" value="P:DNA topological change"/>
    <property type="evidence" value="ECO:0007669"/>
    <property type="project" value="UniProtKB-UniRule"/>
</dbReference>
<dbReference type="CDD" id="cd00223">
    <property type="entry name" value="TOPRIM_TopoIIB_SPO"/>
    <property type="match status" value="1"/>
</dbReference>
<dbReference type="FunFam" id="1.10.10.10:FF:000655">
    <property type="entry name" value="Type 2 DNA topoisomerase 6 subunit A"/>
    <property type="match status" value="1"/>
</dbReference>
<dbReference type="FunFam" id="3.40.1360.10:FF:000011">
    <property type="entry name" value="Type 2 DNA topoisomerase 6 subunit A"/>
    <property type="match status" value="1"/>
</dbReference>
<dbReference type="Gene3D" id="3.40.1360.10">
    <property type="match status" value="1"/>
</dbReference>
<dbReference type="Gene3D" id="1.10.10.10">
    <property type="entry name" value="Winged helix-like DNA-binding domain superfamily/Winged helix DNA-binding domain"/>
    <property type="match status" value="1"/>
</dbReference>
<dbReference type="HAMAP" id="MF_00132">
    <property type="entry name" value="Top6A"/>
    <property type="match status" value="1"/>
</dbReference>
<dbReference type="InterPro" id="IPR002815">
    <property type="entry name" value="Spo11/TopoVI_A"/>
</dbReference>
<dbReference type="InterPro" id="IPR013049">
    <property type="entry name" value="Spo11/TopoVI_A_N"/>
</dbReference>
<dbReference type="InterPro" id="IPR036078">
    <property type="entry name" value="Spo11/TopoVI_A_sf"/>
</dbReference>
<dbReference type="InterPro" id="IPR049333">
    <property type="entry name" value="Topo_VI_alpha"/>
</dbReference>
<dbReference type="InterPro" id="IPR004085">
    <property type="entry name" value="TopoVI_A"/>
</dbReference>
<dbReference type="InterPro" id="IPR034136">
    <property type="entry name" value="TOPRIM_Topo6A/Spo11"/>
</dbReference>
<dbReference type="InterPro" id="IPR036388">
    <property type="entry name" value="WH-like_DNA-bd_sf"/>
</dbReference>
<dbReference type="NCBIfam" id="NF003332">
    <property type="entry name" value="PRK04342.1-1"/>
    <property type="match status" value="1"/>
</dbReference>
<dbReference type="PANTHER" id="PTHR10848">
    <property type="entry name" value="MEIOTIC RECOMBINATION PROTEIN SPO11"/>
    <property type="match status" value="1"/>
</dbReference>
<dbReference type="PANTHER" id="PTHR10848:SF0">
    <property type="entry name" value="MEIOTIC RECOMBINATION PROTEIN SPO11"/>
    <property type="match status" value="1"/>
</dbReference>
<dbReference type="Pfam" id="PF21180">
    <property type="entry name" value="TOP6A-Spo11_Toprim"/>
    <property type="match status" value="1"/>
</dbReference>
<dbReference type="Pfam" id="PF20768">
    <property type="entry name" value="Topo_VI_alpha"/>
    <property type="match status" value="1"/>
</dbReference>
<dbReference type="Pfam" id="PF04406">
    <property type="entry name" value="TP6A_N"/>
    <property type="match status" value="1"/>
</dbReference>
<dbReference type="PRINTS" id="PR01550">
    <property type="entry name" value="TOP6AFAMILY"/>
</dbReference>
<dbReference type="PRINTS" id="PR01552">
    <property type="entry name" value="TPISMRASE6A"/>
</dbReference>
<dbReference type="SUPFAM" id="SSF56726">
    <property type="entry name" value="DNA topoisomerase IV, alpha subunit"/>
    <property type="match status" value="1"/>
</dbReference>
<dbReference type="PROSITE" id="PS52041">
    <property type="entry name" value="TOPO_IIB"/>
    <property type="match status" value="1"/>
</dbReference>